<protein>
    <recommendedName>
        <fullName evidence="1">3-(3-hydroxy-phenyl)propionate/3-hydroxycinnamic acid hydroxylase</fullName>
        <shortName evidence="1">3-HCI hydroxylase</shortName>
        <shortName evidence="1">3-HPP hydroxylase</shortName>
        <ecNumber evidence="1">1.14.13.127</ecNumber>
    </recommendedName>
</protein>
<accession>B7L503</accession>
<comment type="function">
    <text evidence="1">Catalyzes the insertion of one atom of molecular oxygen into position 2 of the phenyl ring of 3-(3-hydroxyphenyl)propionate (3-HPP) and hydroxycinnamic acid (3HCI).</text>
</comment>
<comment type="catalytic activity">
    <reaction evidence="1">
        <text>3-(3-hydroxyphenyl)propanoate + NADH + O2 + H(+) = 3-(2,3-dihydroxyphenyl)propanoate + NAD(+) + H2O</text>
        <dbReference type="Rhea" id="RHEA:24785"/>
        <dbReference type="ChEBI" id="CHEBI:15377"/>
        <dbReference type="ChEBI" id="CHEBI:15378"/>
        <dbReference type="ChEBI" id="CHEBI:15379"/>
        <dbReference type="ChEBI" id="CHEBI:46951"/>
        <dbReference type="ChEBI" id="CHEBI:57277"/>
        <dbReference type="ChEBI" id="CHEBI:57540"/>
        <dbReference type="ChEBI" id="CHEBI:57945"/>
        <dbReference type="EC" id="1.14.13.127"/>
    </reaction>
</comment>
<comment type="catalytic activity">
    <reaction evidence="1">
        <text>(2E)-3-(3-hydroxyphenyl)prop-2-enoate + NADH + O2 + H(+) = (2E)-3-(2,3-dihydroxyphenyl)prop-2-enoate + NAD(+) + H2O</text>
        <dbReference type="Rhea" id="RHEA:27846"/>
        <dbReference type="ChEBI" id="CHEBI:15377"/>
        <dbReference type="ChEBI" id="CHEBI:15378"/>
        <dbReference type="ChEBI" id="CHEBI:15379"/>
        <dbReference type="ChEBI" id="CHEBI:47928"/>
        <dbReference type="ChEBI" id="CHEBI:57540"/>
        <dbReference type="ChEBI" id="CHEBI:57945"/>
        <dbReference type="ChEBI" id="CHEBI:58642"/>
        <dbReference type="EC" id="1.14.13.127"/>
    </reaction>
</comment>
<comment type="cofactor">
    <cofactor evidence="1">
        <name>FAD</name>
        <dbReference type="ChEBI" id="CHEBI:57692"/>
    </cofactor>
</comment>
<comment type="pathway">
    <text evidence="1">Aromatic compound metabolism; 3-phenylpropanoate degradation.</text>
</comment>
<comment type="similarity">
    <text evidence="1">Belongs to the PheA/TfdB FAD monooxygenase family.</text>
</comment>
<proteinExistence type="inferred from homology"/>
<feature type="chain" id="PRO_1000186989" description="3-(3-hydroxy-phenyl)propionate/3-hydroxycinnamic acid hydroxylase">
    <location>
        <begin position="1"/>
        <end position="554"/>
    </location>
</feature>
<feature type="binding site" evidence="1">
    <location>
        <begin position="17"/>
        <end position="46"/>
    </location>
    <ligand>
        <name>FAD</name>
        <dbReference type="ChEBI" id="CHEBI:57692"/>
    </ligand>
</feature>
<feature type="binding site" evidence="1">
    <location>
        <begin position="285"/>
        <end position="295"/>
    </location>
    <ligand>
        <name>FAD</name>
        <dbReference type="ChEBI" id="CHEBI:57692"/>
    </ligand>
</feature>
<reference key="1">
    <citation type="journal article" date="2009" name="PLoS Genet.">
        <title>Organised genome dynamics in the Escherichia coli species results in highly diverse adaptive paths.</title>
        <authorList>
            <person name="Touchon M."/>
            <person name="Hoede C."/>
            <person name="Tenaillon O."/>
            <person name="Barbe V."/>
            <person name="Baeriswyl S."/>
            <person name="Bidet P."/>
            <person name="Bingen E."/>
            <person name="Bonacorsi S."/>
            <person name="Bouchier C."/>
            <person name="Bouvet O."/>
            <person name="Calteau A."/>
            <person name="Chiapello H."/>
            <person name="Clermont O."/>
            <person name="Cruveiller S."/>
            <person name="Danchin A."/>
            <person name="Diard M."/>
            <person name="Dossat C."/>
            <person name="Karoui M.E."/>
            <person name="Frapy E."/>
            <person name="Garry L."/>
            <person name="Ghigo J.M."/>
            <person name="Gilles A.M."/>
            <person name="Johnson J."/>
            <person name="Le Bouguenec C."/>
            <person name="Lescat M."/>
            <person name="Mangenot S."/>
            <person name="Martinez-Jehanne V."/>
            <person name="Matic I."/>
            <person name="Nassif X."/>
            <person name="Oztas S."/>
            <person name="Petit M.A."/>
            <person name="Pichon C."/>
            <person name="Rouy Z."/>
            <person name="Ruf C.S."/>
            <person name="Schneider D."/>
            <person name="Tourret J."/>
            <person name="Vacherie B."/>
            <person name="Vallenet D."/>
            <person name="Medigue C."/>
            <person name="Rocha E.P.C."/>
            <person name="Denamur E."/>
        </authorList>
    </citation>
    <scope>NUCLEOTIDE SEQUENCE [LARGE SCALE GENOMIC DNA]</scope>
    <source>
        <strain>55989 / EAEC</strain>
    </source>
</reference>
<organism>
    <name type="scientific">Escherichia coli (strain 55989 / EAEC)</name>
    <dbReference type="NCBI Taxonomy" id="585055"/>
    <lineage>
        <taxon>Bacteria</taxon>
        <taxon>Pseudomonadati</taxon>
        <taxon>Pseudomonadota</taxon>
        <taxon>Gammaproteobacteria</taxon>
        <taxon>Enterobacterales</taxon>
        <taxon>Enterobacteriaceae</taxon>
        <taxon>Escherichia</taxon>
    </lineage>
</organism>
<name>MHPA_ECO55</name>
<sequence length="554" mass="62154">MAIQHPDIQPAVNHSVQVAIAGAGPVGLMMANYLGQMGIDVLVVEKLDKLIDYPRAIGIDDEALRTMQSVGLVDDVLPHTTPWHAMRFLTPKGRCFADIQPMTDEFGWPRRNAFIQPQVDAVMLEGVSRFPNVRCLFSRELEAFSQQDDEVTLHLKTAEGQREIVKAQWLVACDGGASFVRRTLNVPFEGKTAPNQWIVVDIANDPLSTPHIYLCCDPVRPYVSAALPHAVRRFEFMVMPGETEEQLREPQNMRKLLSKVLPNPDNVELIRQRVYTHNARLAQRFRIDRVLLAGDAAHIMPVWQGQGYNSGMRDAFNLAWKLALVIQGKARDALLDTYQQERRDHAKAMIDLSVTAGNVLAPPKRWQGTLRDGVSWLLNYLPPVKRYFLEMRFKPMPQYYGGALVREGEAKHSPVGKMFIQPKVTLENGDVTLLDNAIGANFAVIGWGCNPLWGMSDEQIQQWRALGTRFIQVVPEVQIHTAQDNHDGVLRVGDTQGRLRSWFAQHNASLVVMRPDRFVAATAIPQTLGKTLNKLASVMTLTRPDADVSVEKVA</sequence>
<evidence type="ECO:0000255" key="1">
    <source>
        <dbReference type="HAMAP-Rule" id="MF_01652"/>
    </source>
</evidence>
<gene>
    <name evidence="1" type="primary">mhpA</name>
    <name type="ordered locus">EC55989_0354</name>
</gene>
<dbReference type="EC" id="1.14.13.127" evidence="1"/>
<dbReference type="EMBL" id="CU928145">
    <property type="protein sequence ID" value="CAU96231.1"/>
    <property type="molecule type" value="Genomic_DNA"/>
</dbReference>
<dbReference type="RefSeq" id="WP_001007409.1">
    <property type="nucleotide sequence ID" value="NC_011748.1"/>
</dbReference>
<dbReference type="SMR" id="B7L503"/>
<dbReference type="KEGG" id="eck:EC55989_0354"/>
<dbReference type="HOGENOM" id="CLU_009665_20_2_6"/>
<dbReference type="UniPathway" id="UPA00714"/>
<dbReference type="Proteomes" id="UP000000746">
    <property type="component" value="Chromosome"/>
</dbReference>
<dbReference type="GO" id="GO:0008688">
    <property type="term" value="F:3-(3-hydroxyphenyl)propionate hydroxylase activity"/>
    <property type="evidence" value="ECO:0007669"/>
    <property type="project" value="UniProtKB-UniRule"/>
</dbReference>
<dbReference type="GO" id="GO:0071949">
    <property type="term" value="F:FAD binding"/>
    <property type="evidence" value="ECO:0007669"/>
    <property type="project" value="InterPro"/>
</dbReference>
<dbReference type="GO" id="GO:0019622">
    <property type="term" value="P:3-(3-hydroxy)phenylpropionate catabolic process"/>
    <property type="evidence" value="ECO:0007669"/>
    <property type="project" value="UniProtKB-UniRule"/>
</dbReference>
<dbReference type="GO" id="GO:0019380">
    <property type="term" value="P:3-phenylpropionate catabolic process"/>
    <property type="evidence" value="ECO:0007669"/>
    <property type="project" value="UniProtKB-UniPathway"/>
</dbReference>
<dbReference type="FunFam" id="3.30.70.2450:FF:000001">
    <property type="entry name" value="3-(3-hydroxy-phenyl)propionate/3-hydroxycinnamic acid hydroxylase"/>
    <property type="match status" value="1"/>
</dbReference>
<dbReference type="FunFam" id="3.50.50.60:FF:000126">
    <property type="entry name" value="3-(3-hydroxy-phenyl)propionate/3-hydroxycinnamic acid hydroxylase"/>
    <property type="match status" value="1"/>
</dbReference>
<dbReference type="Gene3D" id="3.30.70.2450">
    <property type="match status" value="1"/>
</dbReference>
<dbReference type="Gene3D" id="3.50.50.60">
    <property type="entry name" value="FAD/NAD(P)-binding domain"/>
    <property type="match status" value="1"/>
</dbReference>
<dbReference type="HAMAP" id="MF_01652">
    <property type="entry name" value="MhpA"/>
    <property type="match status" value="1"/>
</dbReference>
<dbReference type="InterPro" id="IPR023786">
    <property type="entry name" value="3-HPP/3HCI_hydroxylase"/>
</dbReference>
<dbReference type="InterPro" id="IPR002938">
    <property type="entry name" value="FAD-bd"/>
</dbReference>
<dbReference type="InterPro" id="IPR036188">
    <property type="entry name" value="FAD/NAD-bd_sf"/>
</dbReference>
<dbReference type="InterPro" id="IPR050631">
    <property type="entry name" value="PheA/TfdB_FAD_monoxygenase"/>
</dbReference>
<dbReference type="NCBIfam" id="NF004827">
    <property type="entry name" value="PRK06183.1-1"/>
    <property type="match status" value="1"/>
</dbReference>
<dbReference type="NCBIfam" id="NF004829">
    <property type="entry name" value="PRK06183.1-3"/>
    <property type="match status" value="1"/>
</dbReference>
<dbReference type="NCBIfam" id="NF004831">
    <property type="entry name" value="PRK06183.1-5"/>
    <property type="match status" value="1"/>
</dbReference>
<dbReference type="PANTHER" id="PTHR43476">
    <property type="entry name" value="3-(3-HYDROXY-PHENYL)PROPIONATE/3-HYDROXYCINNAMIC ACID HYDROXYLASE"/>
    <property type="match status" value="1"/>
</dbReference>
<dbReference type="PANTHER" id="PTHR43476:SF3">
    <property type="entry name" value="FAD-BINDING MONOOXYGENASE"/>
    <property type="match status" value="1"/>
</dbReference>
<dbReference type="Pfam" id="PF01494">
    <property type="entry name" value="FAD_binding_3"/>
    <property type="match status" value="1"/>
</dbReference>
<dbReference type="PRINTS" id="PR00420">
    <property type="entry name" value="RNGMNOXGNASE"/>
</dbReference>
<dbReference type="SUPFAM" id="SSF51905">
    <property type="entry name" value="FAD/NAD(P)-binding domain"/>
    <property type="match status" value="1"/>
</dbReference>
<keyword id="KW-0058">Aromatic hydrocarbons catabolism</keyword>
<keyword id="KW-0274">FAD</keyword>
<keyword id="KW-0285">Flavoprotein</keyword>
<keyword id="KW-0520">NAD</keyword>
<keyword id="KW-0560">Oxidoreductase</keyword>
<keyword id="KW-1185">Reference proteome</keyword>